<reference key="1">
    <citation type="journal article" date="1990" name="J. Bacteriol.">
        <title>Nucleotide sequence of the Pseudomonas fluorescens signal peptidase II gene (lsp) and flanking genes.</title>
        <authorList>
            <person name="Isaki L."/>
            <person name="Beers R."/>
            <person name="Wu H.C."/>
        </authorList>
    </citation>
    <scope>NUCLEOTIDE SEQUENCE [GENOMIC DNA]</scope>
    <source>
        <strain>ATCC 49323 / NCIMB 10586</strain>
    </source>
</reference>
<name>FKBX_PSEFL</name>
<sequence length="150" mass="16373">MTDQVLAEQRIGQNTEVTLHFALRLENGDTVDSTFDKAPATFKVGDGNLLPGFEAALFGFKAGDKRTLQILPENAFGQPNPQNVQIIPRSQFQNMDLSEGLLVIFNDAANTELPGVVKAFDDAQVTIDFNHPLAGKTLTFDVEIIDVKAL</sequence>
<dbReference type="EC" id="5.2.1.8"/>
<dbReference type="EMBL" id="M35366">
    <property type="protein sequence ID" value="AAA25885.1"/>
    <property type="molecule type" value="Genomic_DNA"/>
</dbReference>
<dbReference type="PIR" id="C37152">
    <property type="entry name" value="C37152"/>
</dbReference>
<dbReference type="SMR" id="P21863"/>
<dbReference type="eggNOG" id="COG1047">
    <property type="taxonomic scope" value="Bacteria"/>
</dbReference>
<dbReference type="GO" id="GO:0003755">
    <property type="term" value="F:peptidyl-prolyl cis-trans isomerase activity"/>
    <property type="evidence" value="ECO:0007669"/>
    <property type="project" value="UniProtKB-KW"/>
</dbReference>
<dbReference type="GO" id="GO:0006457">
    <property type="term" value="P:protein folding"/>
    <property type="evidence" value="ECO:0007669"/>
    <property type="project" value="UniProtKB-ARBA"/>
</dbReference>
<dbReference type="Gene3D" id="2.40.10.330">
    <property type="match status" value="1"/>
</dbReference>
<dbReference type="Gene3D" id="3.10.50.40">
    <property type="match status" value="1"/>
</dbReference>
<dbReference type="InterPro" id="IPR046357">
    <property type="entry name" value="PPIase_dom_sf"/>
</dbReference>
<dbReference type="InterPro" id="IPR001179">
    <property type="entry name" value="PPIase_FKBP_dom"/>
</dbReference>
<dbReference type="InterPro" id="IPR048261">
    <property type="entry name" value="SlpA/SlyD-like_ins_sf"/>
</dbReference>
<dbReference type="NCBIfam" id="NF011676">
    <property type="entry name" value="PRK15095.1"/>
    <property type="match status" value="1"/>
</dbReference>
<dbReference type="PANTHER" id="PTHR47861:SF4">
    <property type="entry name" value="FKBP-TYPE 16 KDA PEPTIDYL-PROLYL CIS-TRANS ISOMERASE"/>
    <property type="match status" value="1"/>
</dbReference>
<dbReference type="PANTHER" id="PTHR47861">
    <property type="entry name" value="FKBP-TYPE PEPTIDYL-PROLYL CIS-TRANS ISOMERASE SLYD"/>
    <property type="match status" value="1"/>
</dbReference>
<dbReference type="Pfam" id="PF00254">
    <property type="entry name" value="FKBP_C"/>
    <property type="match status" value="1"/>
</dbReference>
<dbReference type="SUPFAM" id="SSF54534">
    <property type="entry name" value="FKBP-like"/>
    <property type="match status" value="1"/>
</dbReference>
<dbReference type="PROSITE" id="PS50059">
    <property type="entry name" value="FKBP_PPIASE"/>
    <property type="match status" value="1"/>
</dbReference>
<comment type="function">
    <text>PPIases accelerate the folding of proteins.</text>
</comment>
<comment type="catalytic activity">
    <reaction>
        <text>[protein]-peptidylproline (omega=180) = [protein]-peptidylproline (omega=0)</text>
        <dbReference type="Rhea" id="RHEA:16237"/>
        <dbReference type="Rhea" id="RHEA-COMP:10747"/>
        <dbReference type="Rhea" id="RHEA-COMP:10748"/>
        <dbReference type="ChEBI" id="CHEBI:83833"/>
        <dbReference type="ChEBI" id="CHEBI:83834"/>
        <dbReference type="EC" id="5.2.1.8"/>
    </reaction>
</comment>
<comment type="similarity">
    <text evidence="2">Belongs to the FKBP-type PPIase family.</text>
</comment>
<gene>
    <name type="primary">yaaD</name>
</gene>
<accession>P21863</accession>
<feature type="chain" id="PRO_0000075374" description="Probable FKBP-type 16 kDa peptidyl-prolyl cis-trans isomerase">
    <location>
        <begin position="1"/>
        <end position="150"/>
    </location>
</feature>
<feature type="domain" description="PPIase FKBP-type" evidence="1">
    <location>
        <begin position="14"/>
        <end position="88"/>
    </location>
</feature>
<proteinExistence type="inferred from homology"/>
<evidence type="ECO:0000255" key="1">
    <source>
        <dbReference type="PROSITE-ProRule" id="PRU00277"/>
    </source>
</evidence>
<evidence type="ECO:0000305" key="2"/>
<protein>
    <recommendedName>
        <fullName>Probable FKBP-type 16 kDa peptidyl-prolyl cis-trans isomerase</fullName>
        <shortName>PPIase</shortName>
        <ecNumber>5.2.1.8</ecNumber>
    </recommendedName>
    <alternativeName>
        <fullName>Rotamase</fullName>
    </alternativeName>
</protein>
<keyword id="KW-0413">Isomerase</keyword>
<keyword id="KW-0697">Rotamase</keyword>
<organism>
    <name type="scientific">Pseudomonas fluorescens</name>
    <dbReference type="NCBI Taxonomy" id="294"/>
    <lineage>
        <taxon>Bacteria</taxon>
        <taxon>Pseudomonadati</taxon>
        <taxon>Pseudomonadota</taxon>
        <taxon>Gammaproteobacteria</taxon>
        <taxon>Pseudomonadales</taxon>
        <taxon>Pseudomonadaceae</taxon>
        <taxon>Pseudomonas</taxon>
    </lineage>
</organism>